<dbReference type="EMBL" id="CR382139">
    <property type="protein sequence ID" value="CAG90511.1"/>
    <property type="molecule type" value="Genomic_DNA"/>
</dbReference>
<dbReference type="RefSeq" id="XP_462027.1">
    <property type="nucleotide sequence ID" value="XM_462027.1"/>
</dbReference>
<dbReference type="SMR" id="Q6BIE4"/>
<dbReference type="FunCoup" id="Q6BIE4">
    <property type="interactions" value="307"/>
</dbReference>
<dbReference type="STRING" id="284592.Q6BIE4"/>
<dbReference type="GeneID" id="2904935"/>
<dbReference type="KEGG" id="dha:DEHA2G11176g"/>
<dbReference type="VEuPathDB" id="FungiDB:DEHA2G11176g"/>
<dbReference type="eggNOG" id="KOG4600">
    <property type="taxonomic scope" value="Eukaryota"/>
</dbReference>
<dbReference type="HOGENOM" id="CLU_063752_0_0_1"/>
<dbReference type="InParanoid" id="Q6BIE4"/>
<dbReference type="OMA" id="YLDPFHP"/>
<dbReference type="OrthoDB" id="1867012at2759"/>
<dbReference type="Proteomes" id="UP000000599">
    <property type="component" value="Chromosome G"/>
</dbReference>
<dbReference type="GO" id="GO:0005762">
    <property type="term" value="C:mitochondrial large ribosomal subunit"/>
    <property type="evidence" value="ECO:0007669"/>
    <property type="project" value="EnsemblFungi"/>
</dbReference>
<dbReference type="GO" id="GO:0003735">
    <property type="term" value="F:structural constituent of ribosome"/>
    <property type="evidence" value="ECO:0007669"/>
    <property type="project" value="EnsemblFungi"/>
</dbReference>
<dbReference type="GO" id="GO:0033617">
    <property type="term" value="P:mitochondrial cytochrome c oxidase assembly"/>
    <property type="evidence" value="ECO:0007669"/>
    <property type="project" value="EnsemblFungi"/>
</dbReference>
<dbReference type="GO" id="GO:0006412">
    <property type="term" value="P:translation"/>
    <property type="evidence" value="ECO:0007669"/>
    <property type="project" value="InterPro"/>
</dbReference>
<dbReference type="FunFam" id="2.40.50.100:FF:000042">
    <property type="entry name" value="50S ribosomal protein L27"/>
    <property type="match status" value="1"/>
</dbReference>
<dbReference type="Gene3D" id="2.40.50.100">
    <property type="match status" value="1"/>
</dbReference>
<dbReference type="InterPro" id="IPR001684">
    <property type="entry name" value="Ribosomal_bL27"/>
</dbReference>
<dbReference type="InterPro" id="IPR018261">
    <property type="entry name" value="Ribosomal_bL27_CS"/>
</dbReference>
<dbReference type="InterPro" id="IPR041244">
    <property type="entry name" value="Ribosomal_bL27m_C"/>
</dbReference>
<dbReference type="NCBIfam" id="TIGR00062">
    <property type="entry name" value="L27"/>
    <property type="match status" value="1"/>
</dbReference>
<dbReference type="PANTHER" id="PTHR15893:SF0">
    <property type="entry name" value="LARGE RIBOSOMAL SUBUNIT PROTEIN BL27M"/>
    <property type="match status" value="1"/>
</dbReference>
<dbReference type="PANTHER" id="PTHR15893">
    <property type="entry name" value="RIBOSOMAL PROTEIN L27"/>
    <property type="match status" value="1"/>
</dbReference>
<dbReference type="Pfam" id="PF01016">
    <property type="entry name" value="Ribosomal_L27"/>
    <property type="match status" value="1"/>
</dbReference>
<dbReference type="Pfam" id="PF18471">
    <property type="entry name" value="Ribosomal_L27_C"/>
    <property type="match status" value="1"/>
</dbReference>
<dbReference type="PRINTS" id="PR00063">
    <property type="entry name" value="RIBOSOMALL27"/>
</dbReference>
<dbReference type="SUPFAM" id="SSF110324">
    <property type="entry name" value="Ribosomal L27 protein-like"/>
    <property type="match status" value="1"/>
</dbReference>
<dbReference type="PROSITE" id="PS00831">
    <property type="entry name" value="RIBOSOMAL_L27"/>
    <property type="match status" value="1"/>
</dbReference>
<keyword id="KW-0496">Mitochondrion</keyword>
<keyword id="KW-1185">Reference proteome</keyword>
<keyword id="KW-0687">Ribonucleoprotein</keyword>
<keyword id="KW-0689">Ribosomal protein</keyword>
<keyword id="KW-0809">Transit peptide</keyword>
<evidence type="ECO:0000250" key="1"/>
<evidence type="ECO:0000256" key="2">
    <source>
        <dbReference type="SAM" id="MobiDB-lite"/>
    </source>
</evidence>
<evidence type="ECO:0000305" key="3"/>
<organism>
    <name type="scientific">Debaryomyces hansenii (strain ATCC 36239 / CBS 767 / BCRC 21394 / JCM 1990 / NBRC 0083 / IGC 2968)</name>
    <name type="common">Yeast</name>
    <name type="synonym">Torulaspora hansenii</name>
    <dbReference type="NCBI Taxonomy" id="284592"/>
    <lineage>
        <taxon>Eukaryota</taxon>
        <taxon>Fungi</taxon>
        <taxon>Dikarya</taxon>
        <taxon>Ascomycota</taxon>
        <taxon>Saccharomycotina</taxon>
        <taxon>Pichiomycetes</taxon>
        <taxon>Debaryomycetaceae</taxon>
        <taxon>Debaryomyces</taxon>
    </lineage>
</organism>
<sequence length="394" mass="45231">MSFIKQVGKLIRPNDYSSSIFQTSFLNNVIQVRTATKRAAGSKTNKNDSAGRRLGPKAYEGHFVKPGQIIMRQRGTKIHPGENVDIGKDHTIFAIEPGYVRFYYDPFHPLRKYVGIALRKDLNLPTPHFSPRVRRFGYEKITDPAEAEKEENHMSRKEFLQQPELEKTRQEQQNQEEQRASAFRNALSSQFNLDLSEADFQLALNRLLNISQLTNVGQTLEDAEVQSTYNYVFDLKLSCKRGEMTSEEFSNLKMHYIQFAENFDKKVTIDAQGNPCTYVTPEAKKENQNEILSKLENEFSNRVISEKDKETIFDLIMTPGIYNLSQQSYLKDRFLPSVLPTTVKETVVEDVDPKKPPKGVIVTRIFDEETKQIKVIGRTKEAYIGQTDLDKSLA</sequence>
<protein>
    <recommendedName>
        <fullName evidence="3">Large ribosomal subunit protein bL27m</fullName>
    </recommendedName>
    <alternativeName>
        <fullName>54S ribosomal protein L2, mitochondrial</fullName>
    </alternativeName>
</protein>
<accession>Q6BIE4</accession>
<name>RM02_DEBHA</name>
<comment type="function">
    <text evidence="1">Component of the large subunit of mitochondrial ribosome.</text>
</comment>
<comment type="subcellular location">
    <subcellularLocation>
        <location evidence="1">Mitochondrion</location>
    </subcellularLocation>
</comment>
<comment type="similarity">
    <text evidence="3">Belongs to the bacterial ribosomal protein bL27 family.</text>
</comment>
<reference key="1">
    <citation type="journal article" date="2004" name="Nature">
        <title>Genome evolution in yeasts.</title>
        <authorList>
            <person name="Dujon B."/>
            <person name="Sherman D."/>
            <person name="Fischer G."/>
            <person name="Durrens P."/>
            <person name="Casaregola S."/>
            <person name="Lafontaine I."/>
            <person name="de Montigny J."/>
            <person name="Marck C."/>
            <person name="Neuveglise C."/>
            <person name="Talla E."/>
            <person name="Goffard N."/>
            <person name="Frangeul L."/>
            <person name="Aigle M."/>
            <person name="Anthouard V."/>
            <person name="Babour A."/>
            <person name="Barbe V."/>
            <person name="Barnay S."/>
            <person name="Blanchin S."/>
            <person name="Beckerich J.-M."/>
            <person name="Beyne E."/>
            <person name="Bleykasten C."/>
            <person name="Boisrame A."/>
            <person name="Boyer J."/>
            <person name="Cattolico L."/>
            <person name="Confanioleri F."/>
            <person name="de Daruvar A."/>
            <person name="Despons L."/>
            <person name="Fabre E."/>
            <person name="Fairhead C."/>
            <person name="Ferry-Dumazet H."/>
            <person name="Groppi A."/>
            <person name="Hantraye F."/>
            <person name="Hennequin C."/>
            <person name="Jauniaux N."/>
            <person name="Joyet P."/>
            <person name="Kachouri R."/>
            <person name="Kerrest A."/>
            <person name="Koszul R."/>
            <person name="Lemaire M."/>
            <person name="Lesur I."/>
            <person name="Ma L."/>
            <person name="Muller H."/>
            <person name="Nicaud J.-M."/>
            <person name="Nikolski M."/>
            <person name="Oztas S."/>
            <person name="Ozier-Kalogeropoulos O."/>
            <person name="Pellenz S."/>
            <person name="Potier S."/>
            <person name="Richard G.-F."/>
            <person name="Straub M.-L."/>
            <person name="Suleau A."/>
            <person name="Swennen D."/>
            <person name="Tekaia F."/>
            <person name="Wesolowski-Louvel M."/>
            <person name="Westhof E."/>
            <person name="Wirth B."/>
            <person name="Zeniou-Meyer M."/>
            <person name="Zivanovic Y."/>
            <person name="Bolotin-Fukuhara M."/>
            <person name="Thierry A."/>
            <person name="Bouchier C."/>
            <person name="Caudron B."/>
            <person name="Scarpelli C."/>
            <person name="Gaillardin C."/>
            <person name="Weissenbach J."/>
            <person name="Wincker P."/>
            <person name="Souciet J.-L."/>
        </authorList>
    </citation>
    <scope>NUCLEOTIDE SEQUENCE [LARGE SCALE GENOMIC DNA]</scope>
    <source>
        <strain>ATCC 36239 / CBS 767 / BCRC 21394 / JCM 1990 / NBRC 0083 / IGC 2968</strain>
    </source>
</reference>
<feature type="transit peptide" description="Mitochondrion" evidence="1">
    <location>
        <begin position="1"/>
        <end position="34"/>
    </location>
</feature>
<feature type="chain" id="PRO_0000030499" description="Large ribosomal subunit protein bL27m">
    <location>
        <begin position="35"/>
        <end position="394"/>
    </location>
</feature>
<feature type="region of interest" description="Disordered" evidence="2">
    <location>
        <begin position="36"/>
        <end position="57"/>
    </location>
</feature>
<feature type="region of interest" description="Disordered" evidence="2">
    <location>
        <begin position="145"/>
        <end position="181"/>
    </location>
</feature>
<feature type="compositionally biased region" description="Basic and acidic residues" evidence="2">
    <location>
        <begin position="145"/>
        <end position="170"/>
    </location>
</feature>
<proteinExistence type="inferred from homology"/>
<gene>
    <name type="primary">MRPL2</name>
    <name type="ordered locus">DEHA2G11176g</name>
</gene>